<organism>
    <name type="scientific">Influenza A virus (strain A/Chicken/Hong Kong/YU22/2002 H5N1 genotype Z)</name>
    <dbReference type="NCBI Taxonomy" id="284177"/>
    <lineage>
        <taxon>Viruses</taxon>
        <taxon>Riboviria</taxon>
        <taxon>Orthornavirae</taxon>
        <taxon>Negarnaviricota</taxon>
        <taxon>Polyploviricotina</taxon>
        <taxon>Insthoviricetes</taxon>
        <taxon>Articulavirales</taxon>
        <taxon>Orthomyxoviridae</taxon>
        <taxon>Alphainfluenzavirus</taxon>
        <taxon>Alphainfluenzavirus influenzae</taxon>
        <taxon>Influenza A virus</taxon>
    </lineage>
</organism>
<keyword id="KW-0025">Alternative splicing</keyword>
<keyword id="KW-1048">Host nucleus</keyword>
<keyword id="KW-0472">Membrane</keyword>
<keyword id="KW-0694">RNA-binding</keyword>
<keyword id="KW-0468">Viral matrix protein</keyword>
<keyword id="KW-0946">Virion</keyword>
<evidence type="ECO:0000255" key="1">
    <source>
        <dbReference type="HAMAP-Rule" id="MF_04068"/>
    </source>
</evidence>
<dbReference type="EMBL" id="AY651403">
    <property type="protein sequence ID" value="AAT70559.1"/>
    <property type="molecule type" value="Genomic_RNA"/>
</dbReference>
<dbReference type="SMR" id="Q6DPT4"/>
<dbReference type="GO" id="GO:0042025">
    <property type="term" value="C:host cell nucleus"/>
    <property type="evidence" value="ECO:0007669"/>
    <property type="project" value="UniProtKB-SubCell"/>
</dbReference>
<dbReference type="GO" id="GO:0016020">
    <property type="term" value="C:membrane"/>
    <property type="evidence" value="ECO:0007669"/>
    <property type="project" value="UniProtKB-KW"/>
</dbReference>
<dbReference type="GO" id="GO:0055036">
    <property type="term" value="C:virion membrane"/>
    <property type="evidence" value="ECO:0007669"/>
    <property type="project" value="UniProtKB-SubCell"/>
</dbReference>
<dbReference type="GO" id="GO:0003723">
    <property type="term" value="F:RNA binding"/>
    <property type="evidence" value="ECO:0007669"/>
    <property type="project" value="UniProtKB-UniRule"/>
</dbReference>
<dbReference type="GO" id="GO:0039660">
    <property type="term" value="F:structural constituent of virion"/>
    <property type="evidence" value="ECO:0007669"/>
    <property type="project" value="UniProtKB-UniRule"/>
</dbReference>
<dbReference type="GO" id="GO:0046761">
    <property type="term" value="P:viral budding from plasma membrane"/>
    <property type="evidence" value="ECO:0007669"/>
    <property type="project" value="UniProtKB-UniRule"/>
</dbReference>
<dbReference type="FunFam" id="1.10.10.180:FF:000001">
    <property type="entry name" value="Matrix protein 1"/>
    <property type="match status" value="1"/>
</dbReference>
<dbReference type="FunFam" id="1.20.91.10:FF:000001">
    <property type="entry name" value="Matrix protein 1"/>
    <property type="match status" value="1"/>
</dbReference>
<dbReference type="Gene3D" id="1.10.10.180">
    <property type="match status" value="1"/>
</dbReference>
<dbReference type="Gene3D" id="1.20.91.10">
    <property type="match status" value="1"/>
</dbReference>
<dbReference type="HAMAP" id="MF_04068">
    <property type="entry name" value="INFV_M1"/>
    <property type="match status" value="1"/>
</dbReference>
<dbReference type="InterPro" id="IPR036039">
    <property type="entry name" value="Flu_matrix_M1"/>
</dbReference>
<dbReference type="InterPro" id="IPR013188">
    <property type="entry name" value="Flu_matrix_M1_C"/>
</dbReference>
<dbReference type="InterPro" id="IPR001561">
    <property type="entry name" value="Flu_matrix_M1_N"/>
</dbReference>
<dbReference type="InterPro" id="IPR015423">
    <property type="entry name" value="Flu_matrix_M1_N_sub1"/>
</dbReference>
<dbReference type="InterPro" id="IPR015799">
    <property type="entry name" value="Flu_matrix_M1_N_sub2"/>
</dbReference>
<dbReference type="InterPro" id="IPR037533">
    <property type="entry name" value="INFV_M1"/>
</dbReference>
<dbReference type="Pfam" id="PF00598">
    <property type="entry name" value="Flu_M1"/>
    <property type="match status" value="1"/>
</dbReference>
<dbReference type="Pfam" id="PF08289">
    <property type="entry name" value="Flu_M1_C"/>
    <property type="match status" value="1"/>
</dbReference>
<dbReference type="SMART" id="SM00759">
    <property type="entry name" value="Flu_M1_C"/>
    <property type="match status" value="1"/>
</dbReference>
<dbReference type="SUPFAM" id="SSF48145">
    <property type="entry name" value="Influenza virus matrix protein M1"/>
    <property type="match status" value="1"/>
</dbReference>
<accession>Q6DPT4</accession>
<protein>
    <recommendedName>
        <fullName evidence="1">Matrix protein 1</fullName>
        <shortName evidence="1">M1</shortName>
    </recommendedName>
</protein>
<organismHost>
    <name type="scientific">Aves</name>
    <dbReference type="NCBI Taxonomy" id="8782"/>
</organismHost>
<organismHost>
    <name type="scientific">Felis catus</name>
    <name type="common">Cat</name>
    <name type="synonym">Felis silvestris catus</name>
    <dbReference type="NCBI Taxonomy" id="9685"/>
</organismHost>
<organismHost>
    <name type="scientific">Homo sapiens</name>
    <name type="common">Human</name>
    <dbReference type="NCBI Taxonomy" id="9606"/>
</organismHost>
<organismHost>
    <name type="scientific">Panthera pardus</name>
    <name type="common">Leopard</name>
    <name type="synonym">Felis pardus</name>
    <dbReference type="NCBI Taxonomy" id="9691"/>
</organismHost>
<organismHost>
    <name type="scientific">Panthera tigris</name>
    <name type="common">Tiger</name>
    <dbReference type="NCBI Taxonomy" id="9694"/>
</organismHost>
<organismHost>
    <name type="scientific">Sus scrofa</name>
    <name type="common">Pig</name>
    <dbReference type="NCBI Taxonomy" id="9823"/>
</organismHost>
<gene>
    <name evidence="1" type="primary">M</name>
</gene>
<name>M1_I02A6</name>
<proteinExistence type="inferred from homology"/>
<feature type="chain" id="PRO_0000311616" description="Matrix protein 1">
    <location>
        <begin position="1"/>
        <end position="252"/>
    </location>
</feature>
<feature type="region of interest" description="Membrane-binding" evidence="1">
    <location>
        <begin position="1"/>
        <end position="164"/>
    </location>
</feature>
<feature type="region of interest" description="RNP-binding" evidence="1">
    <location>
        <begin position="165"/>
        <end position="252"/>
    </location>
</feature>
<feature type="short sequence motif" description="Nuclear localization signal" evidence="1">
    <location>
        <begin position="101"/>
        <end position="105"/>
    </location>
</feature>
<reference key="1">
    <citation type="journal article" date="2004" name="Nature">
        <title>Genesis of a highly pathogenic and potentially pandemic H5N1 influenza virus in eastern Asia.</title>
        <authorList>
            <person name="Li K.S."/>
            <person name="Guan Y."/>
            <person name="Wang J."/>
            <person name="Smith G.J.D."/>
            <person name="Xu K.M."/>
            <person name="Duan L."/>
            <person name="Rahardjo A.P."/>
            <person name="Puthavathana P."/>
            <person name="Buranathai C."/>
            <person name="Nguyen T.D."/>
            <person name="Estoepangestie A.T.S."/>
            <person name="Chaisingh A."/>
            <person name="Auewarakul P."/>
            <person name="Long H.T."/>
            <person name="Hanh N.T.H."/>
            <person name="Webby R.J."/>
            <person name="Poon L.L.M."/>
            <person name="Chen H."/>
            <person name="Shortridge K.F."/>
            <person name="Yuen K.Y."/>
            <person name="Webster R.G."/>
            <person name="Peiris J.S.M."/>
        </authorList>
    </citation>
    <scope>NUCLEOTIDE SEQUENCE [GENOMIC RNA]</scope>
</reference>
<sequence length="252" mass="27933">MSLLTEVETYVLSIIPSGPLKAEIAQKLEDVFAGKNTDLEALMEWLKTRPILSPLTKGILGFVFTLTVPSERGLQRRRFVQNALNGNGDPNNMDRAVKLYKKLKREITFHGAKEVALSYSTGALASCMGLIYNRMGTVTTEVAFGLVCATCEQIADSQHRSHRQMATITNPLIRHENRMVLASTTAKAMEQMAGSSEQAAEAMEVANQARQMVQAMRTIGTHPNSSAGLRDNLLENLQAYQKRMGVQMQRFK</sequence>
<comment type="function">
    <text evidence="1">Plays critical roles in virus replication, from virus entry and uncoating to assembly and budding of the virus particle. M1 binding to ribonucleocapsids (RNPs) in nucleus seems to inhibit viral transcription. Interaction of viral NEP with M1-RNP is thought to promote nuclear export of the complex, which is targeted to the virion assembly site at the apical plasma membrane in polarized epithelial cells. Interactions with NA and HA may bring M1, a non-raft-associated protein, into lipid rafts. Forms a continuous shell on the inner side of the lipid bilayer in virion, where it binds the RNP. During virus entry into cell, the M2 ion channel acidifies the internal virion core, inducing M1 dissociation from the RNP. M1-free RNPs are transported to the nucleus, where viral transcription and replication can take place.</text>
</comment>
<comment type="function">
    <text evidence="1">Determines the virion's shape: spherical or filamentous. Clinical isolates of influenza are characterized by the presence of significant proportion of filamentous virions, whereas after multiple passage on eggs or cell culture, virions have only spherical morphology. Filamentous virions are thought to be important to infect neighboring cells, and spherical virions more suited to spread through aerosol between hosts organisms.</text>
</comment>
<comment type="subunit">
    <text evidence="1">Homodimer and homomultimer. Interacts with NEP. Binds ribonucleocapsid by both interacting with genomic RNA and NP protein. May interact with HA and NA. Cannot bind NP without genomic RNA.</text>
</comment>
<comment type="subcellular location">
    <subcellularLocation>
        <location evidence="1">Virion membrane</location>
        <topology evidence="1">Peripheral membrane protein</topology>
        <orientation evidence="1">Cytoplasmic side</orientation>
    </subcellularLocation>
    <subcellularLocation>
        <location evidence="1">Host nucleus</location>
    </subcellularLocation>
</comment>
<comment type="alternative products">
    <event type="alternative splicing"/>
    <isoform>
        <id>Q6DPT4-1</id>
        <name>M1</name>
        <sequence type="displayed"/>
    </isoform>
    <isoform>
        <id>Q6DPT5-1</id>
        <name>M2</name>
        <sequence type="external"/>
    </isoform>
    <text>Only the first 9 residues are shared by the 2 isoforms.</text>
</comment>
<comment type="miscellaneous">
    <text evidence="1">Most abundant protein in virion. When expressed alone can form virus-like particles in transfected cells.</text>
</comment>
<comment type="similarity">
    <text evidence="1">Belongs to the influenza viruses Matrix protein M1 family.</text>
</comment>